<accession>P36465</accession>
<geneLocation type="chloroplast"/>
<name>RR4_MELAL</name>
<evidence type="ECO:0000250" key="1"/>
<evidence type="ECO:0000256" key="2">
    <source>
        <dbReference type="SAM" id="MobiDB-lite"/>
    </source>
</evidence>
<evidence type="ECO:0000305" key="3"/>
<keyword id="KW-0150">Chloroplast</keyword>
<keyword id="KW-0934">Plastid</keyword>
<keyword id="KW-0687">Ribonucleoprotein</keyword>
<keyword id="KW-0689">Ribosomal protein</keyword>
<keyword id="KW-0694">RNA-binding</keyword>
<keyword id="KW-0699">rRNA-binding</keyword>
<protein>
    <recommendedName>
        <fullName evidence="3">Small ribosomal subunit protein uS4c</fullName>
    </recommendedName>
    <alternativeName>
        <fullName>30S ribosomal protein S4, chloroplastic</fullName>
    </alternativeName>
</protein>
<sequence length="196" mass="22663">MSRYRGPRLKKIRRLGALLGLTRKTPKSGSNPKKKFHSGKKEQYRIRLQEKQKLRFHYGLTERQLLRYVYIAGKAKRSTGQVLLQLLEMRLDNILFRLGMASTIPGARQLVNHRHILVNGRIVNIPSFRCKPRDIITTKDNQRSKGLVQNSIASSDPGKLPKHLTIDTLEYKGLVNKILDRKWVGLKINELLVVEY</sequence>
<proteinExistence type="inferred from homology"/>
<comment type="function">
    <text evidence="1">One of the primary rRNA binding proteins, it binds directly to 16S rRNA where it nucleates assembly of the body of the 30S subunit.</text>
</comment>
<comment type="function">
    <text evidence="1">With S5 and S12 plays an important role in translational accuracy.</text>
</comment>
<comment type="subunit">
    <text evidence="1">Part of the 30S ribosomal subunit. Contacts protein S5. The interaction surface between S4 and S5 is involved in control of translational fidelity (By similarity).</text>
</comment>
<comment type="subcellular location">
    <subcellularLocation>
        <location>Plastid</location>
        <location>Chloroplast</location>
    </subcellularLocation>
</comment>
<comment type="similarity">
    <text evidence="3">Belongs to the universal ribosomal protein uS4 family.</text>
</comment>
<dbReference type="EMBL" id="Z29245">
    <property type="protein sequence ID" value="CAA82444.1"/>
    <property type="molecule type" value="Genomic_DNA"/>
</dbReference>
<dbReference type="PIR" id="S41274">
    <property type="entry name" value="S41274"/>
</dbReference>
<dbReference type="SMR" id="P36465"/>
<dbReference type="GO" id="GO:0009507">
    <property type="term" value="C:chloroplast"/>
    <property type="evidence" value="ECO:0007669"/>
    <property type="project" value="UniProtKB-SubCell"/>
</dbReference>
<dbReference type="GO" id="GO:0015935">
    <property type="term" value="C:small ribosomal subunit"/>
    <property type="evidence" value="ECO:0007669"/>
    <property type="project" value="InterPro"/>
</dbReference>
<dbReference type="GO" id="GO:0019843">
    <property type="term" value="F:rRNA binding"/>
    <property type="evidence" value="ECO:0007669"/>
    <property type="project" value="UniProtKB-KW"/>
</dbReference>
<dbReference type="GO" id="GO:0003735">
    <property type="term" value="F:structural constituent of ribosome"/>
    <property type="evidence" value="ECO:0007669"/>
    <property type="project" value="InterPro"/>
</dbReference>
<dbReference type="GO" id="GO:0042274">
    <property type="term" value="P:ribosomal small subunit biogenesis"/>
    <property type="evidence" value="ECO:0007669"/>
    <property type="project" value="TreeGrafter"/>
</dbReference>
<dbReference type="GO" id="GO:0006412">
    <property type="term" value="P:translation"/>
    <property type="evidence" value="ECO:0007669"/>
    <property type="project" value="InterPro"/>
</dbReference>
<dbReference type="CDD" id="cd00165">
    <property type="entry name" value="S4"/>
    <property type="match status" value="1"/>
</dbReference>
<dbReference type="FunFam" id="1.10.1050.10:FF:000002">
    <property type="entry name" value="30S ribosomal protein S4, chloroplastic"/>
    <property type="match status" value="1"/>
</dbReference>
<dbReference type="FunFam" id="3.10.290.10:FF:000081">
    <property type="entry name" value="30S ribosomal protein S4, chloroplastic"/>
    <property type="match status" value="1"/>
</dbReference>
<dbReference type="Gene3D" id="1.10.1050.10">
    <property type="entry name" value="Ribosomal Protein S4 Delta 41, Chain A, domain 1"/>
    <property type="match status" value="1"/>
</dbReference>
<dbReference type="Gene3D" id="3.10.290.10">
    <property type="entry name" value="RNA-binding S4 domain"/>
    <property type="match status" value="1"/>
</dbReference>
<dbReference type="HAMAP" id="MF_01306_B">
    <property type="entry name" value="Ribosomal_uS4_B"/>
    <property type="match status" value="1"/>
</dbReference>
<dbReference type="InterPro" id="IPR022801">
    <property type="entry name" value="Ribosomal_uS4"/>
</dbReference>
<dbReference type="InterPro" id="IPR005709">
    <property type="entry name" value="Ribosomal_uS4_bac-type"/>
</dbReference>
<dbReference type="InterPro" id="IPR018079">
    <property type="entry name" value="Ribosomal_uS4_CS"/>
</dbReference>
<dbReference type="InterPro" id="IPR001912">
    <property type="entry name" value="Ribosomal_uS4_N"/>
</dbReference>
<dbReference type="InterPro" id="IPR002942">
    <property type="entry name" value="S4_RNA-bd"/>
</dbReference>
<dbReference type="InterPro" id="IPR036986">
    <property type="entry name" value="S4_RNA-bd_sf"/>
</dbReference>
<dbReference type="NCBIfam" id="NF003717">
    <property type="entry name" value="PRK05327.1"/>
    <property type="match status" value="1"/>
</dbReference>
<dbReference type="NCBIfam" id="TIGR01017">
    <property type="entry name" value="rpsD_bact"/>
    <property type="match status" value="1"/>
</dbReference>
<dbReference type="PANTHER" id="PTHR11831">
    <property type="entry name" value="30S 40S RIBOSOMAL PROTEIN"/>
    <property type="match status" value="1"/>
</dbReference>
<dbReference type="PANTHER" id="PTHR11831:SF4">
    <property type="entry name" value="SMALL RIBOSOMAL SUBUNIT PROTEIN US4M"/>
    <property type="match status" value="1"/>
</dbReference>
<dbReference type="Pfam" id="PF00163">
    <property type="entry name" value="Ribosomal_S4"/>
    <property type="match status" value="1"/>
</dbReference>
<dbReference type="Pfam" id="PF01479">
    <property type="entry name" value="S4"/>
    <property type="match status" value="1"/>
</dbReference>
<dbReference type="SMART" id="SM01390">
    <property type="entry name" value="Ribosomal_S4"/>
    <property type="match status" value="1"/>
</dbReference>
<dbReference type="SMART" id="SM00363">
    <property type="entry name" value="S4"/>
    <property type="match status" value="1"/>
</dbReference>
<dbReference type="SUPFAM" id="SSF55174">
    <property type="entry name" value="Alpha-L RNA-binding motif"/>
    <property type="match status" value="1"/>
</dbReference>
<dbReference type="PROSITE" id="PS00632">
    <property type="entry name" value="RIBOSOMAL_S4"/>
    <property type="match status" value="1"/>
</dbReference>
<dbReference type="PROSITE" id="PS50889">
    <property type="entry name" value="S4"/>
    <property type="match status" value="1"/>
</dbReference>
<organism>
    <name type="scientific">Melica altissima</name>
    <name type="common">Siberian melic grass</name>
    <dbReference type="NCBI Taxonomy" id="29685"/>
    <lineage>
        <taxon>Eukaryota</taxon>
        <taxon>Viridiplantae</taxon>
        <taxon>Streptophyta</taxon>
        <taxon>Embryophyta</taxon>
        <taxon>Tracheophyta</taxon>
        <taxon>Spermatophyta</taxon>
        <taxon>Magnoliopsida</taxon>
        <taxon>Liliopsida</taxon>
        <taxon>Poales</taxon>
        <taxon>Poaceae</taxon>
        <taxon>BOP clade</taxon>
        <taxon>Pooideae</taxon>
        <taxon>Melicodae</taxon>
        <taxon>Meliceae</taxon>
        <taxon>Melica</taxon>
    </lineage>
</organism>
<reference key="1">
    <citation type="journal article" date="1994" name="Plant Syst. Evol.">
        <title>The chloroplast gene rps4 as a tool for the study of Poaceae phylogeny.</title>
        <authorList>
            <person name="Nadot S."/>
            <person name="Bajon R."/>
            <person name="Lejeune B."/>
        </authorList>
        <dbReference type="AGRICOLA" id="IND20417698"/>
    </citation>
    <scope>NUCLEOTIDE SEQUENCE [GENOMIC DNA]</scope>
</reference>
<feature type="chain" id="PRO_0000132626" description="Small ribosomal subunit protein uS4c">
    <location>
        <begin position="1"/>
        <end position="196" status="greater than"/>
    </location>
</feature>
<feature type="domain" description="S4 RNA-binding">
    <location>
        <begin position="89"/>
        <end position="169"/>
    </location>
</feature>
<feature type="region of interest" description="Disordered" evidence="2">
    <location>
        <begin position="22"/>
        <end position="42"/>
    </location>
</feature>
<feature type="non-terminal residue">
    <location>
        <position position="196"/>
    </location>
</feature>
<gene>
    <name type="primary">rps4</name>
</gene>